<proteinExistence type="inferred from homology"/>
<keyword id="KW-0963">Cytoplasm</keyword>
<keyword id="KW-0378">Hydrolase</keyword>
<keyword id="KW-1185">Reference proteome</keyword>
<organism>
    <name type="scientific">Stutzerimonas stutzeri (strain A1501)</name>
    <name type="common">Pseudomonas stutzeri</name>
    <dbReference type="NCBI Taxonomy" id="379731"/>
    <lineage>
        <taxon>Bacteria</taxon>
        <taxon>Pseudomonadati</taxon>
        <taxon>Pseudomonadota</taxon>
        <taxon>Gammaproteobacteria</taxon>
        <taxon>Pseudomonadales</taxon>
        <taxon>Pseudomonadaceae</taxon>
        <taxon>Stutzerimonas</taxon>
    </lineage>
</organism>
<evidence type="ECO:0000255" key="1">
    <source>
        <dbReference type="HAMAP-Rule" id="MF_01954"/>
    </source>
</evidence>
<name>URE2_STUS1</name>
<gene>
    <name evidence="1" type="primary">ureB</name>
    <name type="ordered locus">PST_3728</name>
</gene>
<protein>
    <recommendedName>
        <fullName evidence="1">Urease subunit beta</fullName>
        <ecNumber evidence="1">3.5.1.5</ecNumber>
    </recommendedName>
    <alternativeName>
        <fullName evidence="1">Urea amidohydrolase subunit beta</fullName>
    </alternativeName>
</protein>
<dbReference type="EC" id="3.5.1.5" evidence="1"/>
<dbReference type="EMBL" id="CP000304">
    <property type="protein sequence ID" value="ABP81351.1"/>
    <property type="molecule type" value="Genomic_DNA"/>
</dbReference>
<dbReference type="RefSeq" id="WP_011914741.1">
    <property type="nucleotide sequence ID" value="NC_009434.1"/>
</dbReference>
<dbReference type="SMR" id="A4VQV0"/>
<dbReference type="KEGG" id="psa:PST_3728"/>
<dbReference type="eggNOG" id="COG0832">
    <property type="taxonomic scope" value="Bacteria"/>
</dbReference>
<dbReference type="HOGENOM" id="CLU_129707_1_1_6"/>
<dbReference type="UniPathway" id="UPA00258">
    <property type="reaction ID" value="UER00370"/>
</dbReference>
<dbReference type="Proteomes" id="UP000000233">
    <property type="component" value="Chromosome"/>
</dbReference>
<dbReference type="GO" id="GO:0035550">
    <property type="term" value="C:urease complex"/>
    <property type="evidence" value="ECO:0007669"/>
    <property type="project" value="InterPro"/>
</dbReference>
<dbReference type="GO" id="GO:0009039">
    <property type="term" value="F:urease activity"/>
    <property type="evidence" value="ECO:0007669"/>
    <property type="project" value="UniProtKB-UniRule"/>
</dbReference>
<dbReference type="GO" id="GO:0043419">
    <property type="term" value="P:urea catabolic process"/>
    <property type="evidence" value="ECO:0007669"/>
    <property type="project" value="UniProtKB-UniRule"/>
</dbReference>
<dbReference type="CDD" id="cd00407">
    <property type="entry name" value="Urease_beta"/>
    <property type="match status" value="1"/>
</dbReference>
<dbReference type="FunFam" id="2.10.150.10:FF:000001">
    <property type="entry name" value="Urease subunit beta"/>
    <property type="match status" value="1"/>
</dbReference>
<dbReference type="Gene3D" id="2.10.150.10">
    <property type="entry name" value="Urease, beta subunit"/>
    <property type="match status" value="1"/>
</dbReference>
<dbReference type="HAMAP" id="MF_01954">
    <property type="entry name" value="Urease_beta"/>
    <property type="match status" value="1"/>
</dbReference>
<dbReference type="InterPro" id="IPR002019">
    <property type="entry name" value="Urease_beta-like"/>
</dbReference>
<dbReference type="InterPro" id="IPR036461">
    <property type="entry name" value="Urease_betasu_sf"/>
</dbReference>
<dbReference type="InterPro" id="IPR050069">
    <property type="entry name" value="Urease_subunit"/>
</dbReference>
<dbReference type="NCBIfam" id="NF009682">
    <property type="entry name" value="PRK13203.1"/>
    <property type="match status" value="1"/>
</dbReference>
<dbReference type="NCBIfam" id="TIGR00192">
    <property type="entry name" value="urease_beta"/>
    <property type="match status" value="1"/>
</dbReference>
<dbReference type="PANTHER" id="PTHR33569">
    <property type="entry name" value="UREASE"/>
    <property type="match status" value="1"/>
</dbReference>
<dbReference type="PANTHER" id="PTHR33569:SF1">
    <property type="entry name" value="UREASE"/>
    <property type="match status" value="1"/>
</dbReference>
<dbReference type="Pfam" id="PF00699">
    <property type="entry name" value="Urease_beta"/>
    <property type="match status" value="1"/>
</dbReference>
<dbReference type="SUPFAM" id="SSF51278">
    <property type="entry name" value="Urease, beta-subunit"/>
    <property type="match status" value="1"/>
</dbReference>
<reference key="1">
    <citation type="journal article" date="2008" name="Proc. Natl. Acad. Sci. U.S.A.">
        <title>Nitrogen fixation island and rhizosphere competence traits in the genome of root-associated Pseudomonas stutzeri A1501.</title>
        <authorList>
            <person name="Yan Y."/>
            <person name="Yang J."/>
            <person name="Dou Y."/>
            <person name="Chen M."/>
            <person name="Ping S."/>
            <person name="Peng J."/>
            <person name="Lu W."/>
            <person name="Zhang W."/>
            <person name="Yao Z."/>
            <person name="Li H."/>
            <person name="Liu W."/>
            <person name="He S."/>
            <person name="Geng L."/>
            <person name="Zhang X."/>
            <person name="Yang F."/>
            <person name="Yu H."/>
            <person name="Zhan Y."/>
            <person name="Li D."/>
            <person name="Lin Z."/>
            <person name="Wang Y."/>
            <person name="Elmerich C."/>
            <person name="Lin M."/>
            <person name="Jin Q."/>
        </authorList>
    </citation>
    <scope>NUCLEOTIDE SEQUENCE [LARGE SCALE GENOMIC DNA]</scope>
    <source>
        <strain>A1501</strain>
    </source>
</reference>
<accession>A4VQV0</accession>
<comment type="catalytic activity">
    <reaction evidence="1">
        <text>urea + 2 H2O + H(+) = hydrogencarbonate + 2 NH4(+)</text>
        <dbReference type="Rhea" id="RHEA:20557"/>
        <dbReference type="ChEBI" id="CHEBI:15377"/>
        <dbReference type="ChEBI" id="CHEBI:15378"/>
        <dbReference type="ChEBI" id="CHEBI:16199"/>
        <dbReference type="ChEBI" id="CHEBI:17544"/>
        <dbReference type="ChEBI" id="CHEBI:28938"/>
        <dbReference type="EC" id="3.5.1.5"/>
    </reaction>
</comment>
<comment type="pathway">
    <text evidence="1">Nitrogen metabolism; urea degradation; CO(2) and NH(3) from urea (urease route): step 1/1.</text>
</comment>
<comment type="subunit">
    <text evidence="1">Heterotrimer of UreA (gamma), UreB (beta) and UreC (alpha) subunits. Three heterotrimers associate to form the active enzyme.</text>
</comment>
<comment type="subcellular location">
    <subcellularLocation>
        <location evidence="1">Cytoplasm</location>
    </subcellularLocation>
</comment>
<comment type="similarity">
    <text evidence="1">Belongs to the urease beta subunit family.</text>
</comment>
<feature type="chain" id="PRO_1000070762" description="Urease subunit beta">
    <location>
        <begin position="1"/>
        <end position="101"/>
    </location>
</feature>
<sequence length="101" mass="11097">MIPGEYQIQDGDIELNAGRRTLTLCVANSGDRPIQVGSHYHFFETNDALTFDRAASRGMRLNIPAGTAVRFEPGQSREVELVELAGERRVFGFAGRVMGAL</sequence>